<feature type="chain" id="PRO_0000322653" description="Dictomallein">
    <location>
        <begin position="1"/>
        <end position="687"/>
    </location>
</feature>
<feature type="domain" description="Peptidase M66">
    <location>
        <begin position="233"/>
        <end position="501"/>
    </location>
</feature>
<feature type="region of interest" description="Disordered" evidence="2">
    <location>
        <begin position="1"/>
        <end position="45"/>
    </location>
</feature>
<feature type="region of interest" description="Disordered" evidence="2">
    <location>
        <begin position="73"/>
        <end position="112"/>
    </location>
</feature>
<feature type="active site" evidence="1">
    <location>
        <position position="394"/>
    </location>
</feature>
<feature type="binding site" evidence="1">
    <location>
        <position position="393"/>
    </location>
    <ligand>
        <name>Zn(2+)</name>
        <dbReference type="ChEBI" id="CHEBI:29105"/>
        <note>catalytic</note>
    </ligand>
</feature>
<feature type="binding site" evidence="1">
    <location>
        <position position="397"/>
    </location>
    <ligand>
        <name>Zn(2+)</name>
        <dbReference type="ChEBI" id="CHEBI:29105"/>
        <note>catalytic</note>
    </ligand>
</feature>
<feature type="binding site" evidence="1">
    <location>
        <position position="403"/>
    </location>
    <ligand>
        <name>Zn(2+)</name>
        <dbReference type="ChEBI" id="CHEBI:29105"/>
        <note>catalytic</note>
    </ligand>
</feature>
<sequence>MGNGERPPARRPDSSGSPPPAADAPAASNHPFSSHDTKHMTSRRLASRTAVAASLSALMLAACGGDDSANAPTAGGAAPLTPAVASPAGPTGSTPGSTPGATTAPAPSSTSAGQLSVDKMAFAQTHVVPSGGLSWTLPNASASLRPISRRDALVLVAIGQADAVQPVLEAWKDGAKLGALALSPPSALPPTESGGRAYANDRWSAVVPAAWMVPGVSFSVSASNYTSSVAQAPVFGTDADVQLTILPFYLFGADDTNSPPLSTTQAPDAATQQEIFAKWPTAELKVRTHPAGRFSLATVVVGPRADRTGAAQPAYPVTALDQQKDGYGVMSAMLTLITNMRTANGDGPLNDQYYAPLIALNSNGQFANLGGGLGGVGSGAAVGDHRYTGIFIHEQGHAFGLNHAGDEYAKGAYPYAGGSLSGSVWGYDPNHREFLDVLVPTTASSYAKCASSHQLDAQGRCYKQDPMQGGAGDQSSGYKFATFSDYNTGRMQAWIASRVLADPASSTGYSKWDSAAQARAPYTPTTDNNGLYGVNQNLPVQAGVPVHTIVVSFSKAGSAGASYIYPPFSYTGNLIATFDPTSAADRQAITVDKGTYPWYCKGTGCDYTLRVTYADGSRTYRVLQGGFRAWWTPTVYDANATNPLSGSSFRVWAINVPGDKRIGKIELLDTPMVWNGMPANPTVLLSR</sequence>
<reference key="1">
    <citation type="journal article" date="2010" name="Genome Biol. Evol.">
        <title>Continuing evolution of Burkholderia mallei through genome reduction and large-scale rearrangements.</title>
        <authorList>
            <person name="Losada L."/>
            <person name="Ronning C.M."/>
            <person name="DeShazer D."/>
            <person name="Woods D."/>
            <person name="Fedorova N."/>
            <person name="Kim H.S."/>
            <person name="Shabalina S.A."/>
            <person name="Pearson T.R."/>
            <person name="Brinkac L."/>
            <person name="Tan P."/>
            <person name="Nandi T."/>
            <person name="Crabtree J."/>
            <person name="Badger J."/>
            <person name="Beckstrom-Sternberg S."/>
            <person name="Saqib M."/>
            <person name="Schutzer S.E."/>
            <person name="Keim P."/>
            <person name="Nierman W.C."/>
        </authorList>
    </citation>
    <scope>NUCLEOTIDE SEQUENCE [LARGE SCALE GENOMIC DNA]</scope>
    <source>
        <strain>NCTC 10247</strain>
    </source>
</reference>
<keyword id="KW-0378">Hydrolase</keyword>
<keyword id="KW-0479">Metal-binding</keyword>
<keyword id="KW-0482">Metalloprotease</keyword>
<keyword id="KW-0645">Protease</keyword>
<keyword id="KW-0862">Zinc</keyword>
<protein>
    <recommendedName>
        <fullName>Dictomallein</fullName>
        <ecNumber>3.4.24.-</ecNumber>
    </recommendedName>
</protein>
<dbReference type="EC" id="3.4.24.-"/>
<dbReference type="EMBL" id="CP000547">
    <property type="protein sequence ID" value="ABO03699.1"/>
    <property type="molecule type" value="Genomic_DNA"/>
</dbReference>
<dbReference type="RefSeq" id="WP_004198081.1">
    <property type="nucleotide sequence ID" value="NZ_CP007801.1"/>
</dbReference>
<dbReference type="SMR" id="A3MDY1"/>
<dbReference type="KEGG" id="bmn:BMA10247_A1281"/>
<dbReference type="GO" id="GO:0046872">
    <property type="term" value="F:metal ion binding"/>
    <property type="evidence" value="ECO:0007669"/>
    <property type="project" value="UniProtKB-KW"/>
</dbReference>
<dbReference type="GO" id="GO:0004222">
    <property type="term" value="F:metalloendopeptidase activity"/>
    <property type="evidence" value="ECO:0007669"/>
    <property type="project" value="InterPro"/>
</dbReference>
<dbReference type="GO" id="GO:0006508">
    <property type="term" value="P:proteolysis"/>
    <property type="evidence" value="ECO:0007669"/>
    <property type="project" value="UniProtKB-KW"/>
</dbReference>
<dbReference type="InterPro" id="IPR051256">
    <property type="entry name" value="Dictomallein"/>
</dbReference>
<dbReference type="InterPro" id="IPR019503">
    <property type="entry name" value="Peptidase_M66_dom"/>
</dbReference>
<dbReference type="PANTHER" id="PTHR39540">
    <property type="match status" value="1"/>
</dbReference>
<dbReference type="PANTHER" id="PTHR39540:SF1">
    <property type="entry name" value="DICTOMALLEIN-1-RELATED"/>
    <property type="match status" value="1"/>
</dbReference>
<dbReference type="Pfam" id="PF10462">
    <property type="entry name" value="Peptidase_M66"/>
    <property type="match status" value="1"/>
</dbReference>
<dbReference type="SUPFAM" id="SSF55486">
    <property type="entry name" value="Metalloproteases ('zincins'), catalytic domain"/>
    <property type="match status" value="1"/>
</dbReference>
<dbReference type="PROSITE" id="PS51694">
    <property type="entry name" value="PEPTIDASE_M66"/>
    <property type="match status" value="1"/>
</dbReference>
<evidence type="ECO:0000250" key="1"/>
<evidence type="ECO:0000256" key="2">
    <source>
        <dbReference type="SAM" id="MobiDB-lite"/>
    </source>
</evidence>
<evidence type="ECO:0000305" key="3"/>
<name>DTML_BURM7</name>
<accession>A3MDY1</accession>
<gene>
    <name type="primary">dtmL</name>
    <name type="ordered locus">BMA10247_A1281</name>
</gene>
<comment type="cofactor">
    <cofactor evidence="3">
        <name>Zn(2+)</name>
        <dbReference type="ChEBI" id="CHEBI:29105"/>
    </cofactor>
    <text evidence="3">Binds 1 zinc ion per subunit.</text>
</comment>
<comment type="similarity">
    <text evidence="3">Belongs to the dictomallein family.</text>
</comment>
<organism>
    <name type="scientific">Burkholderia mallei (strain NCTC 10247)</name>
    <dbReference type="NCBI Taxonomy" id="320389"/>
    <lineage>
        <taxon>Bacteria</taxon>
        <taxon>Pseudomonadati</taxon>
        <taxon>Pseudomonadota</taxon>
        <taxon>Betaproteobacteria</taxon>
        <taxon>Burkholderiales</taxon>
        <taxon>Burkholderiaceae</taxon>
        <taxon>Burkholderia</taxon>
        <taxon>pseudomallei group</taxon>
    </lineage>
</organism>
<proteinExistence type="inferred from homology"/>